<reference key="1">
    <citation type="journal article" date="2003" name="Genome Res.">
        <title>Comparative complete genome sequence analysis of the amino acid replacements responsible for the thermostability of Corynebacterium efficiens.</title>
        <authorList>
            <person name="Nishio Y."/>
            <person name="Nakamura Y."/>
            <person name="Kawarabayasi Y."/>
            <person name="Usuda Y."/>
            <person name="Kimura E."/>
            <person name="Sugimoto S."/>
            <person name="Matsui K."/>
            <person name="Yamagishi A."/>
            <person name="Kikuchi H."/>
            <person name="Ikeo K."/>
            <person name="Gojobori T."/>
        </authorList>
    </citation>
    <scope>NUCLEOTIDE SEQUENCE [LARGE SCALE GENOMIC DNA]</scope>
    <source>
        <strain>DSM 44549 / YS-314 / AJ 12310 / JCM 11189 / NBRC 100395</strain>
    </source>
</reference>
<name>MURE_COREF</name>
<sequence length="526" mass="55720">MCADTPHHPTPVHTEEAMAITLGELARTIGGELFNAPDQDLEIHNIGLDSSTLAKKAPIFAAVPGSRKHGAEFADTDRAAGALAVLTDRDGATILDRKGDTRPRLIVDDVREVLGVASSSVYGDPSRDLVLIGVTGTSGKTTTSYLLERGLMEAGYKVGLIGTTGTRIDGEPVPTKLTTPEAPTLQKLFYRMRQHGVTHVVMEVSSHALSLGRVSGSHFNVAAFTNLSQDHLDFHDTMEEYFDAKALFFRAGSPLAADHQVVCIDDEWGTRMAEVAGNAQTVATTGKRADFTAGLVTVKETGEQSFTVTVPDHGEVPVTLALPGAFNVANATLALAAAVRAGVDPVAFARGMAQVAVPGRMERIDEGQDFLAVVDYAHKPAAVAAVLDTLRTQIDGRLGVVIGAGGDRDATKRAPMGELSARRADLVIVTDDNPRSEVPATIRAAVMEGARRGAAEADHEVEVREIGDRAEAIRALIEWAGPGDGIVVAGKGHEVGQLIAGVTHHFDDREQVREALRHTQSDGEGK</sequence>
<proteinExistence type="inferred from homology"/>
<gene>
    <name evidence="1" type="primary">murE</name>
    <name type="ordered locus">CE2058</name>
</gene>
<accession>Q8FNT5</accession>
<feature type="chain" id="PRO_0000101889" description="UDP-N-acetylmuramoyl-L-alanyl-D-glutamate--2,6-diaminopimelate ligase">
    <location>
        <begin position="1"/>
        <end position="526"/>
    </location>
</feature>
<feature type="short sequence motif" description="Meso-diaminopimelate recognition motif">
    <location>
        <begin position="432"/>
        <end position="435"/>
    </location>
</feature>
<feature type="binding site" evidence="1">
    <location>
        <position position="48"/>
    </location>
    <ligand>
        <name>UDP-N-acetyl-alpha-D-muramoyl-L-alanyl-D-glutamate</name>
        <dbReference type="ChEBI" id="CHEBI:83900"/>
    </ligand>
</feature>
<feature type="binding site" evidence="1">
    <location>
        <position position="50"/>
    </location>
    <ligand>
        <name>UDP-N-acetyl-alpha-D-muramoyl-L-alanyl-D-glutamate</name>
        <dbReference type="ChEBI" id="CHEBI:83900"/>
    </ligand>
</feature>
<feature type="binding site" evidence="1">
    <location>
        <begin position="136"/>
        <end position="142"/>
    </location>
    <ligand>
        <name>ATP</name>
        <dbReference type="ChEBI" id="CHEBI:30616"/>
    </ligand>
</feature>
<feature type="binding site" evidence="1">
    <location>
        <begin position="178"/>
        <end position="179"/>
    </location>
    <ligand>
        <name>UDP-N-acetyl-alpha-D-muramoyl-L-alanyl-D-glutamate</name>
        <dbReference type="ChEBI" id="CHEBI:83900"/>
    </ligand>
</feature>
<feature type="binding site" evidence="1">
    <location>
        <position position="205"/>
    </location>
    <ligand>
        <name>UDP-N-acetyl-alpha-D-muramoyl-L-alanyl-D-glutamate</name>
        <dbReference type="ChEBI" id="CHEBI:83900"/>
    </ligand>
</feature>
<feature type="binding site" evidence="1">
    <location>
        <position position="213"/>
    </location>
    <ligand>
        <name>UDP-N-acetyl-alpha-D-muramoyl-L-alanyl-D-glutamate</name>
        <dbReference type="ChEBI" id="CHEBI:83900"/>
    </ligand>
</feature>
<feature type="binding site" evidence="1">
    <location>
        <position position="408"/>
    </location>
    <ligand>
        <name>meso-2,6-diaminopimelate</name>
        <dbReference type="ChEBI" id="CHEBI:57791"/>
    </ligand>
</feature>
<feature type="binding site" evidence="1">
    <location>
        <begin position="432"/>
        <end position="435"/>
    </location>
    <ligand>
        <name>meso-2,6-diaminopimelate</name>
        <dbReference type="ChEBI" id="CHEBI:57791"/>
    </ligand>
</feature>
<feature type="binding site" evidence="1">
    <location>
        <position position="490"/>
    </location>
    <ligand>
        <name>meso-2,6-diaminopimelate</name>
        <dbReference type="ChEBI" id="CHEBI:57791"/>
    </ligand>
</feature>
<feature type="binding site" evidence="1">
    <location>
        <position position="494"/>
    </location>
    <ligand>
        <name>meso-2,6-diaminopimelate</name>
        <dbReference type="ChEBI" id="CHEBI:57791"/>
    </ligand>
</feature>
<feature type="modified residue" description="N6-carboxylysine" evidence="1">
    <location>
        <position position="245"/>
    </location>
</feature>
<protein>
    <recommendedName>
        <fullName evidence="1">UDP-N-acetylmuramoyl-L-alanyl-D-glutamate--2,6-diaminopimelate ligase</fullName>
        <ecNumber evidence="1">6.3.2.13</ecNumber>
    </recommendedName>
    <alternativeName>
        <fullName evidence="1">Meso-A2pm-adding enzyme</fullName>
    </alternativeName>
    <alternativeName>
        <fullName evidence="1">Meso-diaminopimelate-adding enzyme</fullName>
    </alternativeName>
    <alternativeName>
        <fullName evidence="1">UDP-MurNAc-L-Ala-D-Glu:meso-diaminopimelate ligase</fullName>
    </alternativeName>
    <alternativeName>
        <fullName evidence="1">UDP-MurNAc-tripeptide synthetase</fullName>
    </alternativeName>
    <alternativeName>
        <fullName evidence="1">UDP-N-acetylmuramyl-tripeptide synthetase</fullName>
    </alternativeName>
</protein>
<dbReference type="EC" id="6.3.2.13" evidence="1"/>
<dbReference type="EMBL" id="BA000035">
    <property type="protein sequence ID" value="BAC18868.1"/>
    <property type="molecule type" value="Genomic_DNA"/>
</dbReference>
<dbReference type="SMR" id="Q8FNT5"/>
<dbReference type="STRING" id="196164.gene:10742486"/>
<dbReference type="KEGG" id="cef:CE2058"/>
<dbReference type="eggNOG" id="COG0769">
    <property type="taxonomic scope" value="Bacteria"/>
</dbReference>
<dbReference type="HOGENOM" id="CLU_022291_4_1_11"/>
<dbReference type="UniPathway" id="UPA00219"/>
<dbReference type="Proteomes" id="UP000001409">
    <property type="component" value="Chromosome"/>
</dbReference>
<dbReference type="GO" id="GO:0005737">
    <property type="term" value="C:cytoplasm"/>
    <property type="evidence" value="ECO:0007669"/>
    <property type="project" value="UniProtKB-SubCell"/>
</dbReference>
<dbReference type="GO" id="GO:0005524">
    <property type="term" value="F:ATP binding"/>
    <property type="evidence" value="ECO:0007669"/>
    <property type="project" value="UniProtKB-UniRule"/>
</dbReference>
<dbReference type="GO" id="GO:0000287">
    <property type="term" value="F:magnesium ion binding"/>
    <property type="evidence" value="ECO:0007669"/>
    <property type="project" value="UniProtKB-UniRule"/>
</dbReference>
<dbReference type="GO" id="GO:0008765">
    <property type="term" value="F:UDP-N-acetylmuramoylalanyl-D-glutamate-2,6-diaminopimelate ligase activity"/>
    <property type="evidence" value="ECO:0007669"/>
    <property type="project" value="UniProtKB-UniRule"/>
</dbReference>
<dbReference type="GO" id="GO:0051301">
    <property type="term" value="P:cell division"/>
    <property type="evidence" value="ECO:0007669"/>
    <property type="project" value="UniProtKB-KW"/>
</dbReference>
<dbReference type="GO" id="GO:0071555">
    <property type="term" value="P:cell wall organization"/>
    <property type="evidence" value="ECO:0007669"/>
    <property type="project" value="UniProtKB-KW"/>
</dbReference>
<dbReference type="GO" id="GO:0009252">
    <property type="term" value="P:peptidoglycan biosynthetic process"/>
    <property type="evidence" value="ECO:0007669"/>
    <property type="project" value="UniProtKB-UniRule"/>
</dbReference>
<dbReference type="GO" id="GO:0008360">
    <property type="term" value="P:regulation of cell shape"/>
    <property type="evidence" value="ECO:0007669"/>
    <property type="project" value="UniProtKB-KW"/>
</dbReference>
<dbReference type="Gene3D" id="3.90.190.20">
    <property type="entry name" value="Mur ligase, C-terminal domain"/>
    <property type="match status" value="1"/>
</dbReference>
<dbReference type="Gene3D" id="3.40.1190.10">
    <property type="entry name" value="Mur-like, catalytic domain"/>
    <property type="match status" value="1"/>
</dbReference>
<dbReference type="Gene3D" id="3.40.1390.10">
    <property type="entry name" value="MurE/MurF, N-terminal domain"/>
    <property type="match status" value="1"/>
</dbReference>
<dbReference type="HAMAP" id="MF_00208">
    <property type="entry name" value="MurE"/>
    <property type="match status" value="1"/>
</dbReference>
<dbReference type="InterPro" id="IPR036565">
    <property type="entry name" value="Mur-like_cat_sf"/>
</dbReference>
<dbReference type="InterPro" id="IPR004101">
    <property type="entry name" value="Mur_ligase_C"/>
</dbReference>
<dbReference type="InterPro" id="IPR036615">
    <property type="entry name" value="Mur_ligase_C_dom_sf"/>
</dbReference>
<dbReference type="InterPro" id="IPR013221">
    <property type="entry name" value="Mur_ligase_cen"/>
</dbReference>
<dbReference type="InterPro" id="IPR000713">
    <property type="entry name" value="Mur_ligase_N"/>
</dbReference>
<dbReference type="InterPro" id="IPR035911">
    <property type="entry name" value="MurE/MurF_N"/>
</dbReference>
<dbReference type="InterPro" id="IPR005761">
    <property type="entry name" value="UDP-N-AcMur-Glu-dNH2Pim_ligase"/>
</dbReference>
<dbReference type="NCBIfam" id="TIGR01085">
    <property type="entry name" value="murE"/>
    <property type="match status" value="1"/>
</dbReference>
<dbReference type="NCBIfam" id="NF001124">
    <property type="entry name" value="PRK00139.1-2"/>
    <property type="match status" value="1"/>
</dbReference>
<dbReference type="NCBIfam" id="NF001126">
    <property type="entry name" value="PRK00139.1-4"/>
    <property type="match status" value="1"/>
</dbReference>
<dbReference type="PANTHER" id="PTHR23135">
    <property type="entry name" value="MUR LIGASE FAMILY MEMBER"/>
    <property type="match status" value="1"/>
</dbReference>
<dbReference type="PANTHER" id="PTHR23135:SF4">
    <property type="entry name" value="UDP-N-ACETYLMURAMOYL-L-ALANYL-D-GLUTAMATE--2,6-DIAMINOPIMELATE LIGASE MURE HOMOLOG, CHLOROPLASTIC"/>
    <property type="match status" value="1"/>
</dbReference>
<dbReference type="Pfam" id="PF01225">
    <property type="entry name" value="Mur_ligase"/>
    <property type="match status" value="1"/>
</dbReference>
<dbReference type="Pfam" id="PF02875">
    <property type="entry name" value="Mur_ligase_C"/>
    <property type="match status" value="1"/>
</dbReference>
<dbReference type="Pfam" id="PF08245">
    <property type="entry name" value="Mur_ligase_M"/>
    <property type="match status" value="1"/>
</dbReference>
<dbReference type="SUPFAM" id="SSF53623">
    <property type="entry name" value="MurD-like peptide ligases, catalytic domain"/>
    <property type="match status" value="1"/>
</dbReference>
<dbReference type="SUPFAM" id="SSF53244">
    <property type="entry name" value="MurD-like peptide ligases, peptide-binding domain"/>
    <property type="match status" value="1"/>
</dbReference>
<dbReference type="SUPFAM" id="SSF63418">
    <property type="entry name" value="MurE/MurF N-terminal domain"/>
    <property type="match status" value="1"/>
</dbReference>
<organism>
    <name type="scientific">Corynebacterium efficiens (strain DSM 44549 / YS-314 / AJ 12310 / JCM 11189 / NBRC 100395)</name>
    <dbReference type="NCBI Taxonomy" id="196164"/>
    <lineage>
        <taxon>Bacteria</taxon>
        <taxon>Bacillati</taxon>
        <taxon>Actinomycetota</taxon>
        <taxon>Actinomycetes</taxon>
        <taxon>Mycobacteriales</taxon>
        <taxon>Corynebacteriaceae</taxon>
        <taxon>Corynebacterium</taxon>
    </lineage>
</organism>
<evidence type="ECO:0000255" key="1">
    <source>
        <dbReference type="HAMAP-Rule" id="MF_00208"/>
    </source>
</evidence>
<comment type="function">
    <text evidence="1">Catalyzes the addition of meso-diaminopimelic acid to the nucleotide precursor UDP-N-acetylmuramoyl-L-alanyl-D-glutamate (UMAG) in the biosynthesis of bacterial cell-wall peptidoglycan.</text>
</comment>
<comment type="catalytic activity">
    <reaction evidence="1">
        <text>UDP-N-acetyl-alpha-D-muramoyl-L-alanyl-D-glutamate + meso-2,6-diaminopimelate + ATP = UDP-N-acetyl-alpha-D-muramoyl-L-alanyl-gamma-D-glutamyl-meso-2,6-diaminopimelate + ADP + phosphate + H(+)</text>
        <dbReference type="Rhea" id="RHEA:23676"/>
        <dbReference type="ChEBI" id="CHEBI:15378"/>
        <dbReference type="ChEBI" id="CHEBI:30616"/>
        <dbReference type="ChEBI" id="CHEBI:43474"/>
        <dbReference type="ChEBI" id="CHEBI:57791"/>
        <dbReference type="ChEBI" id="CHEBI:83900"/>
        <dbReference type="ChEBI" id="CHEBI:83905"/>
        <dbReference type="ChEBI" id="CHEBI:456216"/>
        <dbReference type="EC" id="6.3.2.13"/>
    </reaction>
</comment>
<comment type="cofactor">
    <cofactor evidence="1">
        <name>Mg(2+)</name>
        <dbReference type="ChEBI" id="CHEBI:18420"/>
    </cofactor>
</comment>
<comment type="pathway">
    <text evidence="1">Cell wall biogenesis; peptidoglycan biosynthesis.</text>
</comment>
<comment type="subcellular location">
    <subcellularLocation>
        <location evidence="1">Cytoplasm</location>
    </subcellularLocation>
</comment>
<comment type="PTM">
    <text evidence="1">Carboxylation is probably crucial for Mg(2+) binding and, consequently, for the gamma-phosphate positioning of ATP.</text>
</comment>
<comment type="similarity">
    <text evidence="1">Belongs to the MurCDEF family. MurE subfamily.</text>
</comment>
<keyword id="KW-0067">ATP-binding</keyword>
<keyword id="KW-0131">Cell cycle</keyword>
<keyword id="KW-0132">Cell division</keyword>
<keyword id="KW-0133">Cell shape</keyword>
<keyword id="KW-0961">Cell wall biogenesis/degradation</keyword>
<keyword id="KW-0963">Cytoplasm</keyword>
<keyword id="KW-0436">Ligase</keyword>
<keyword id="KW-0460">Magnesium</keyword>
<keyword id="KW-0547">Nucleotide-binding</keyword>
<keyword id="KW-0573">Peptidoglycan synthesis</keyword>
<keyword id="KW-1185">Reference proteome</keyword>